<reference key="1">
    <citation type="submission" date="2003-03" db="EMBL/GenBank/DDBJ databases">
        <title>The complete genome sequence of Neisseria gonorrhoeae.</title>
        <authorList>
            <person name="Lewis L.A."/>
            <person name="Gillaspy A.F."/>
            <person name="McLaughlin R.E."/>
            <person name="Gipson M."/>
            <person name="Ducey T.F."/>
            <person name="Ownbey T."/>
            <person name="Hartman K."/>
            <person name="Nydick C."/>
            <person name="Carson M.B."/>
            <person name="Vaughn J."/>
            <person name="Thomson C."/>
            <person name="Song L."/>
            <person name="Lin S."/>
            <person name="Yuan X."/>
            <person name="Najar F."/>
            <person name="Zhan M."/>
            <person name="Ren Q."/>
            <person name="Zhu H."/>
            <person name="Qi S."/>
            <person name="Kenton S.M."/>
            <person name="Lai H."/>
            <person name="White J.D."/>
            <person name="Clifton S."/>
            <person name="Roe B.A."/>
            <person name="Dyer D.W."/>
        </authorList>
    </citation>
    <scope>NUCLEOTIDE SEQUENCE [LARGE SCALE GENOMIC DNA]</scope>
    <source>
        <strain>ATCC 700825 / FA 1090</strain>
    </source>
</reference>
<name>RSMH_NEIG1</name>
<comment type="function">
    <text evidence="1">Specifically methylates the N4 position of cytidine in position 1402 (C1402) of 16S rRNA.</text>
</comment>
<comment type="catalytic activity">
    <reaction evidence="1">
        <text>cytidine(1402) in 16S rRNA + S-adenosyl-L-methionine = N(4)-methylcytidine(1402) in 16S rRNA + S-adenosyl-L-homocysteine + H(+)</text>
        <dbReference type="Rhea" id="RHEA:42928"/>
        <dbReference type="Rhea" id="RHEA-COMP:10286"/>
        <dbReference type="Rhea" id="RHEA-COMP:10287"/>
        <dbReference type="ChEBI" id="CHEBI:15378"/>
        <dbReference type="ChEBI" id="CHEBI:57856"/>
        <dbReference type="ChEBI" id="CHEBI:59789"/>
        <dbReference type="ChEBI" id="CHEBI:74506"/>
        <dbReference type="ChEBI" id="CHEBI:82748"/>
        <dbReference type="EC" id="2.1.1.199"/>
    </reaction>
</comment>
<comment type="subcellular location">
    <subcellularLocation>
        <location evidence="1">Cytoplasm</location>
    </subcellularLocation>
</comment>
<comment type="similarity">
    <text evidence="1">Belongs to the methyltransferase superfamily. RsmH family.</text>
</comment>
<feature type="chain" id="PRO_0000108669" description="Ribosomal RNA small subunit methyltransferase H">
    <location>
        <begin position="1"/>
        <end position="318"/>
    </location>
</feature>
<feature type="binding site" evidence="1">
    <location>
        <begin position="37"/>
        <end position="39"/>
    </location>
    <ligand>
        <name>S-adenosyl-L-methionine</name>
        <dbReference type="ChEBI" id="CHEBI:59789"/>
    </ligand>
</feature>
<feature type="binding site" evidence="1">
    <location>
        <position position="57"/>
    </location>
    <ligand>
        <name>S-adenosyl-L-methionine</name>
        <dbReference type="ChEBI" id="CHEBI:59789"/>
    </ligand>
</feature>
<feature type="binding site" evidence="1">
    <location>
        <position position="83"/>
    </location>
    <ligand>
        <name>S-adenosyl-L-methionine</name>
        <dbReference type="ChEBI" id="CHEBI:59789"/>
    </ligand>
</feature>
<feature type="binding site" evidence="1">
    <location>
        <position position="104"/>
    </location>
    <ligand>
        <name>S-adenosyl-L-methionine</name>
        <dbReference type="ChEBI" id="CHEBI:59789"/>
    </ligand>
</feature>
<feature type="binding site" evidence="1">
    <location>
        <position position="111"/>
    </location>
    <ligand>
        <name>S-adenosyl-L-methionine</name>
        <dbReference type="ChEBI" id="CHEBI:59789"/>
    </ligand>
</feature>
<dbReference type="EC" id="2.1.1.199" evidence="1"/>
<dbReference type="EMBL" id="AE004969">
    <property type="protein sequence ID" value="AAW90180.1"/>
    <property type="molecule type" value="Genomic_DNA"/>
</dbReference>
<dbReference type="RefSeq" id="WP_003697441.1">
    <property type="nucleotide sequence ID" value="NC_002946.2"/>
</dbReference>
<dbReference type="RefSeq" id="YP_208592.1">
    <property type="nucleotide sequence ID" value="NC_002946.2"/>
</dbReference>
<dbReference type="SMR" id="Q5F6K7"/>
<dbReference type="STRING" id="242231.NGO_1544"/>
<dbReference type="KEGG" id="ngo:NGO_1544"/>
<dbReference type="PATRIC" id="fig|242231.10.peg.1841"/>
<dbReference type="HOGENOM" id="CLU_038422_2_0_4"/>
<dbReference type="Proteomes" id="UP000000535">
    <property type="component" value="Chromosome"/>
</dbReference>
<dbReference type="GO" id="GO:0005737">
    <property type="term" value="C:cytoplasm"/>
    <property type="evidence" value="ECO:0007669"/>
    <property type="project" value="UniProtKB-SubCell"/>
</dbReference>
<dbReference type="GO" id="GO:0071424">
    <property type="term" value="F:rRNA (cytosine-N4-)-methyltransferase activity"/>
    <property type="evidence" value="ECO:0007669"/>
    <property type="project" value="UniProtKB-UniRule"/>
</dbReference>
<dbReference type="GO" id="GO:0070475">
    <property type="term" value="P:rRNA base methylation"/>
    <property type="evidence" value="ECO:0007669"/>
    <property type="project" value="UniProtKB-UniRule"/>
</dbReference>
<dbReference type="FunFam" id="1.10.150.170:FF:000001">
    <property type="entry name" value="Ribosomal RNA small subunit methyltransferase H"/>
    <property type="match status" value="1"/>
</dbReference>
<dbReference type="Gene3D" id="1.10.150.170">
    <property type="entry name" value="Putative methyltransferase TM0872, insert domain"/>
    <property type="match status" value="1"/>
</dbReference>
<dbReference type="Gene3D" id="3.40.50.150">
    <property type="entry name" value="Vaccinia Virus protein VP39"/>
    <property type="match status" value="1"/>
</dbReference>
<dbReference type="HAMAP" id="MF_01007">
    <property type="entry name" value="16SrRNA_methyltr_H"/>
    <property type="match status" value="1"/>
</dbReference>
<dbReference type="InterPro" id="IPR002903">
    <property type="entry name" value="RsmH"/>
</dbReference>
<dbReference type="InterPro" id="IPR023397">
    <property type="entry name" value="SAM-dep_MeTrfase_MraW_recog"/>
</dbReference>
<dbReference type="InterPro" id="IPR029063">
    <property type="entry name" value="SAM-dependent_MTases_sf"/>
</dbReference>
<dbReference type="NCBIfam" id="TIGR00006">
    <property type="entry name" value="16S rRNA (cytosine(1402)-N(4))-methyltransferase RsmH"/>
    <property type="match status" value="1"/>
</dbReference>
<dbReference type="PANTHER" id="PTHR11265:SF0">
    <property type="entry name" value="12S RRNA N4-METHYLCYTIDINE METHYLTRANSFERASE"/>
    <property type="match status" value="1"/>
</dbReference>
<dbReference type="PANTHER" id="PTHR11265">
    <property type="entry name" value="S-ADENOSYL-METHYLTRANSFERASE MRAW"/>
    <property type="match status" value="1"/>
</dbReference>
<dbReference type="Pfam" id="PF01795">
    <property type="entry name" value="Methyltransf_5"/>
    <property type="match status" value="1"/>
</dbReference>
<dbReference type="PIRSF" id="PIRSF004486">
    <property type="entry name" value="MraW"/>
    <property type="match status" value="1"/>
</dbReference>
<dbReference type="SUPFAM" id="SSF81799">
    <property type="entry name" value="Putative methyltransferase TM0872, insert domain"/>
    <property type="match status" value="1"/>
</dbReference>
<dbReference type="SUPFAM" id="SSF53335">
    <property type="entry name" value="S-adenosyl-L-methionine-dependent methyltransferases"/>
    <property type="match status" value="1"/>
</dbReference>
<evidence type="ECO:0000255" key="1">
    <source>
        <dbReference type="HAMAP-Rule" id="MF_01007"/>
    </source>
</evidence>
<keyword id="KW-0963">Cytoplasm</keyword>
<keyword id="KW-0489">Methyltransferase</keyword>
<keyword id="KW-1185">Reference proteome</keyword>
<keyword id="KW-0698">rRNA processing</keyword>
<keyword id="KW-0949">S-adenosyl-L-methionine</keyword>
<keyword id="KW-0808">Transferase</keyword>
<gene>
    <name evidence="1" type="primary">rsmH</name>
    <name type="synonym">mraW</name>
    <name type="ordered locus">NGO_1544</name>
</gene>
<proteinExistence type="inferred from homology"/>
<protein>
    <recommendedName>
        <fullName evidence="1">Ribosomal RNA small subunit methyltransferase H</fullName>
        <ecNumber evidence="1">2.1.1.199</ecNumber>
    </recommendedName>
    <alternativeName>
        <fullName evidence="1">16S rRNA m(4)C1402 methyltransferase</fullName>
    </alternativeName>
    <alternativeName>
        <fullName evidence="1">rRNA (cytosine-N(4)-)-methyltransferase RsmH</fullName>
    </alternativeName>
</protein>
<sequence length="318" mass="34829">MSGAESYRHITVLLNEAVDALAVREDGVYVDGTFGRGGHSRLILSRLGDAGRLIVFDKDPQAIAVAEELARSDKRVGVVHGGFASFQTALDGLGIGKVDGALFDLGISSPQIDDGSRGFSFRFDAPLDMRMDTTRGMSAAEWIAVASEQDLHEVIKNYGEERFSRQIVRAIVAQRAESPIDTTRKLAQIVAQNVRTRERGQDPATRTFQAIRIFINRELEEVGAVLPQVMCRLKEGGRLAVIAFHSLEDRIVKQFVKKYSQHEPLPSWAAVREADLPDPPLKIVGRALKPGEAEIAANPRARSAVLRVAERTAGPIPE</sequence>
<organism>
    <name type="scientific">Neisseria gonorrhoeae (strain ATCC 700825 / FA 1090)</name>
    <dbReference type="NCBI Taxonomy" id="242231"/>
    <lineage>
        <taxon>Bacteria</taxon>
        <taxon>Pseudomonadati</taxon>
        <taxon>Pseudomonadota</taxon>
        <taxon>Betaproteobacteria</taxon>
        <taxon>Neisseriales</taxon>
        <taxon>Neisseriaceae</taxon>
        <taxon>Neisseria</taxon>
    </lineage>
</organism>
<accession>Q5F6K7</accession>